<gene>
    <name evidence="1" type="primary">purC</name>
    <name type="ordered locus">Gbem_2511</name>
</gene>
<feature type="chain" id="PRO_1000095986" description="Phosphoribosylaminoimidazole-succinocarboxamide synthase">
    <location>
        <begin position="1"/>
        <end position="296"/>
    </location>
</feature>
<sequence>MTTPVLNTDFPGLKLAARGKVRDIYDLGETLLIVTTDRISAFDVIMNEGIPHKGYVLTQISAYWFRQMEDIIKNHIISTDVTDFPKECQPYADVLAGRSMWVKKAKPLAAECIVRGYISGSGWKDYQKTGAICGIKLPEGLKESDRLPQPIFTPSTKAELGTHDENISFEEMCRICGTEISTKVRDVTLAIYEKARDLADQKGIIIADTKFEYGIYDGELIIIDECMTPDSSRFWPKESYKPGGPQPSFDKQFLRDYLETLDWGKTAPAPPLPEEIVRKTGEKYMEALVKLTGKGI</sequence>
<keyword id="KW-0067">ATP-binding</keyword>
<keyword id="KW-0436">Ligase</keyword>
<keyword id="KW-0547">Nucleotide-binding</keyword>
<keyword id="KW-0658">Purine biosynthesis</keyword>
<keyword id="KW-1185">Reference proteome</keyword>
<organism>
    <name type="scientific">Citrifermentans bemidjiense (strain ATCC BAA-1014 / DSM 16622 / JCM 12645 / Bem)</name>
    <name type="common">Geobacter bemidjiensis</name>
    <dbReference type="NCBI Taxonomy" id="404380"/>
    <lineage>
        <taxon>Bacteria</taxon>
        <taxon>Pseudomonadati</taxon>
        <taxon>Thermodesulfobacteriota</taxon>
        <taxon>Desulfuromonadia</taxon>
        <taxon>Geobacterales</taxon>
        <taxon>Geobacteraceae</taxon>
        <taxon>Citrifermentans</taxon>
    </lineage>
</organism>
<name>PUR7_CITBB</name>
<reference key="1">
    <citation type="submission" date="2008-07" db="EMBL/GenBank/DDBJ databases">
        <title>Complete sequence of Geobacter bemidjiensis BEM.</title>
        <authorList>
            <consortium name="US DOE Joint Genome Institute"/>
            <person name="Lucas S."/>
            <person name="Copeland A."/>
            <person name="Lapidus A."/>
            <person name="Glavina del Rio T."/>
            <person name="Dalin E."/>
            <person name="Tice H."/>
            <person name="Bruce D."/>
            <person name="Goodwin L."/>
            <person name="Pitluck S."/>
            <person name="Kiss H."/>
            <person name="Brettin T."/>
            <person name="Detter J.C."/>
            <person name="Han C."/>
            <person name="Kuske C.R."/>
            <person name="Schmutz J."/>
            <person name="Larimer F."/>
            <person name="Land M."/>
            <person name="Hauser L."/>
            <person name="Kyrpides N."/>
            <person name="Lykidis A."/>
            <person name="Lovley D."/>
            <person name="Richardson P."/>
        </authorList>
    </citation>
    <scope>NUCLEOTIDE SEQUENCE [LARGE SCALE GENOMIC DNA]</scope>
    <source>
        <strain>ATCC BAA-1014 / DSM 16622 / JCM 12645 / Bem</strain>
    </source>
</reference>
<comment type="catalytic activity">
    <reaction evidence="1">
        <text>5-amino-1-(5-phospho-D-ribosyl)imidazole-4-carboxylate + L-aspartate + ATP = (2S)-2-[5-amino-1-(5-phospho-beta-D-ribosyl)imidazole-4-carboxamido]succinate + ADP + phosphate + 2 H(+)</text>
        <dbReference type="Rhea" id="RHEA:22628"/>
        <dbReference type="ChEBI" id="CHEBI:15378"/>
        <dbReference type="ChEBI" id="CHEBI:29991"/>
        <dbReference type="ChEBI" id="CHEBI:30616"/>
        <dbReference type="ChEBI" id="CHEBI:43474"/>
        <dbReference type="ChEBI" id="CHEBI:58443"/>
        <dbReference type="ChEBI" id="CHEBI:77657"/>
        <dbReference type="ChEBI" id="CHEBI:456216"/>
        <dbReference type="EC" id="6.3.2.6"/>
    </reaction>
</comment>
<comment type="pathway">
    <text evidence="1">Purine metabolism; IMP biosynthesis via de novo pathway; 5-amino-1-(5-phospho-D-ribosyl)imidazole-4-carboxamide from 5-amino-1-(5-phospho-D-ribosyl)imidazole-4-carboxylate: step 1/2.</text>
</comment>
<comment type="similarity">
    <text evidence="1">Belongs to the SAICAR synthetase family.</text>
</comment>
<proteinExistence type="inferred from homology"/>
<evidence type="ECO:0000255" key="1">
    <source>
        <dbReference type="HAMAP-Rule" id="MF_00137"/>
    </source>
</evidence>
<accession>B5EGN6</accession>
<dbReference type="EC" id="6.3.2.6" evidence="1"/>
<dbReference type="EMBL" id="CP001124">
    <property type="protein sequence ID" value="ACH39519.1"/>
    <property type="molecule type" value="Genomic_DNA"/>
</dbReference>
<dbReference type="RefSeq" id="WP_012530942.1">
    <property type="nucleotide sequence ID" value="NC_011146.1"/>
</dbReference>
<dbReference type="SMR" id="B5EGN6"/>
<dbReference type="STRING" id="404380.Gbem_2511"/>
<dbReference type="KEGG" id="gbm:Gbem_2511"/>
<dbReference type="eggNOG" id="COG0152">
    <property type="taxonomic scope" value="Bacteria"/>
</dbReference>
<dbReference type="HOGENOM" id="CLU_045637_0_0_7"/>
<dbReference type="OrthoDB" id="9801549at2"/>
<dbReference type="UniPathway" id="UPA00074">
    <property type="reaction ID" value="UER00131"/>
</dbReference>
<dbReference type="Proteomes" id="UP000008825">
    <property type="component" value="Chromosome"/>
</dbReference>
<dbReference type="GO" id="GO:0005737">
    <property type="term" value="C:cytoplasm"/>
    <property type="evidence" value="ECO:0007669"/>
    <property type="project" value="TreeGrafter"/>
</dbReference>
<dbReference type="GO" id="GO:0005524">
    <property type="term" value="F:ATP binding"/>
    <property type="evidence" value="ECO:0007669"/>
    <property type="project" value="UniProtKB-KW"/>
</dbReference>
<dbReference type="GO" id="GO:0004639">
    <property type="term" value="F:phosphoribosylaminoimidazolesuccinocarboxamide synthase activity"/>
    <property type="evidence" value="ECO:0007669"/>
    <property type="project" value="UniProtKB-UniRule"/>
</dbReference>
<dbReference type="GO" id="GO:0006189">
    <property type="term" value="P:'de novo' IMP biosynthetic process"/>
    <property type="evidence" value="ECO:0007669"/>
    <property type="project" value="UniProtKB-UniRule"/>
</dbReference>
<dbReference type="CDD" id="cd01414">
    <property type="entry name" value="SAICAR_synt_Sc"/>
    <property type="match status" value="1"/>
</dbReference>
<dbReference type="FunFam" id="3.30.200.20:FF:000392">
    <property type="entry name" value="Phosphoribosylaminoimidazole-succinocarboxamide synthase"/>
    <property type="match status" value="1"/>
</dbReference>
<dbReference type="FunFam" id="3.30.470.20:FF:000015">
    <property type="entry name" value="Phosphoribosylaminoimidazole-succinocarboxamide synthase"/>
    <property type="match status" value="1"/>
</dbReference>
<dbReference type="Gene3D" id="3.30.470.20">
    <property type="entry name" value="ATP-grasp fold, B domain"/>
    <property type="match status" value="1"/>
</dbReference>
<dbReference type="Gene3D" id="3.30.200.20">
    <property type="entry name" value="Phosphorylase Kinase, domain 1"/>
    <property type="match status" value="1"/>
</dbReference>
<dbReference type="HAMAP" id="MF_00137">
    <property type="entry name" value="SAICAR_synth"/>
    <property type="match status" value="1"/>
</dbReference>
<dbReference type="InterPro" id="IPR028923">
    <property type="entry name" value="SAICAR_synt/ADE2_N"/>
</dbReference>
<dbReference type="InterPro" id="IPR001636">
    <property type="entry name" value="SAICAR_synth"/>
</dbReference>
<dbReference type="NCBIfam" id="NF010568">
    <property type="entry name" value="PRK13961.1"/>
    <property type="match status" value="1"/>
</dbReference>
<dbReference type="NCBIfam" id="TIGR00081">
    <property type="entry name" value="purC"/>
    <property type="match status" value="1"/>
</dbReference>
<dbReference type="PANTHER" id="PTHR43700">
    <property type="entry name" value="PHOSPHORIBOSYLAMINOIMIDAZOLE-SUCCINOCARBOXAMIDE SYNTHASE"/>
    <property type="match status" value="1"/>
</dbReference>
<dbReference type="PANTHER" id="PTHR43700:SF1">
    <property type="entry name" value="PHOSPHORIBOSYLAMINOIMIDAZOLE-SUCCINOCARBOXAMIDE SYNTHASE"/>
    <property type="match status" value="1"/>
</dbReference>
<dbReference type="Pfam" id="PF01259">
    <property type="entry name" value="SAICAR_synt"/>
    <property type="match status" value="1"/>
</dbReference>
<dbReference type="SUPFAM" id="SSF56104">
    <property type="entry name" value="SAICAR synthase-like"/>
    <property type="match status" value="1"/>
</dbReference>
<protein>
    <recommendedName>
        <fullName evidence="1">Phosphoribosylaminoimidazole-succinocarboxamide synthase</fullName>
        <ecNumber evidence="1">6.3.2.6</ecNumber>
    </recommendedName>
    <alternativeName>
        <fullName evidence="1">SAICAR synthetase</fullName>
    </alternativeName>
</protein>